<dbReference type="EC" id="3.4.21.-"/>
<dbReference type="EMBL" id="DQ382274">
    <property type="protein sequence ID" value="ABD38560.1"/>
    <property type="molecule type" value="Genomic_DNA"/>
</dbReference>
<dbReference type="SMR" id="A1XIH5"/>
<dbReference type="GlyCosmos" id="A1XIH5">
    <property type="glycosylation" value="3 sites, No reported glycans"/>
</dbReference>
<dbReference type="GO" id="GO:0005576">
    <property type="term" value="C:extracellular region"/>
    <property type="evidence" value="ECO:0007669"/>
    <property type="project" value="UniProtKB-SubCell"/>
</dbReference>
<dbReference type="GO" id="GO:0004252">
    <property type="term" value="F:serine-type endopeptidase activity"/>
    <property type="evidence" value="ECO:0007669"/>
    <property type="project" value="InterPro"/>
</dbReference>
<dbReference type="GO" id="GO:0006508">
    <property type="term" value="P:proteolysis"/>
    <property type="evidence" value="ECO:0007669"/>
    <property type="project" value="UniProtKB-KW"/>
</dbReference>
<dbReference type="CDD" id="cd04077">
    <property type="entry name" value="Peptidases_S8_PCSK9_ProteinaseK_like"/>
    <property type="match status" value="1"/>
</dbReference>
<dbReference type="FunFam" id="3.40.50.200:FF:000014">
    <property type="entry name" value="Proteinase K"/>
    <property type="match status" value="1"/>
</dbReference>
<dbReference type="Gene3D" id="3.30.70.80">
    <property type="entry name" value="Peptidase S8 propeptide/proteinase inhibitor I9"/>
    <property type="match status" value="1"/>
</dbReference>
<dbReference type="Gene3D" id="3.40.50.200">
    <property type="entry name" value="Peptidase S8/S53 domain"/>
    <property type="match status" value="1"/>
</dbReference>
<dbReference type="InterPro" id="IPR034193">
    <property type="entry name" value="PCSK9_ProteinaseK-like"/>
</dbReference>
<dbReference type="InterPro" id="IPR000209">
    <property type="entry name" value="Peptidase_S8/S53_dom"/>
</dbReference>
<dbReference type="InterPro" id="IPR036852">
    <property type="entry name" value="Peptidase_S8/S53_dom_sf"/>
</dbReference>
<dbReference type="InterPro" id="IPR022398">
    <property type="entry name" value="Peptidase_S8_His-AS"/>
</dbReference>
<dbReference type="InterPro" id="IPR050131">
    <property type="entry name" value="Peptidase_S8_subtilisin-like"/>
</dbReference>
<dbReference type="InterPro" id="IPR015500">
    <property type="entry name" value="Peptidase_S8_subtilisin-rel"/>
</dbReference>
<dbReference type="InterPro" id="IPR010259">
    <property type="entry name" value="S8pro/Inhibitor_I9"/>
</dbReference>
<dbReference type="InterPro" id="IPR037045">
    <property type="entry name" value="S8pro/Inhibitor_I9_sf"/>
</dbReference>
<dbReference type="PANTHER" id="PTHR43806:SF11">
    <property type="entry name" value="CEREVISIN-RELATED"/>
    <property type="match status" value="1"/>
</dbReference>
<dbReference type="PANTHER" id="PTHR43806">
    <property type="entry name" value="PEPTIDASE S8"/>
    <property type="match status" value="1"/>
</dbReference>
<dbReference type="Pfam" id="PF05922">
    <property type="entry name" value="Inhibitor_I9"/>
    <property type="match status" value="1"/>
</dbReference>
<dbReference type="Pfam" id="PF00082">
    <property type="entry name" value="Peptidase_S8"/>
    <property type="match status" value="1"/>
</dbReference>
<dbReference type="PRINTS" id="PR00723">
    <property type="entry name" value="SUBTILISIN"/>
</dbReference>
<dbReference type="SUPFAM" id="SSF54897">
    <property type="entry name" value="Protease propeptides/inhibitors"/>
    <property type="match status" value="1"/>
</dbReference>
<dbReference type="SUPFAM" id="SSF52743">
    <property type="entry name" value="Subtilisin-like"/>
    <property type="match status" value="1"/>
</dbReference>
<dbReference type="PROSITE" id="PS51892">
    <property type="entry name" value="SUBTILASE"/>
    <property type="match status" value="1"/>
</dbReference>
<dbReference type="PROSITE" id="PS00137">
    <property type="entry name" value="SUBTILASE_HIS"/>
    <property type="match status" value="1"/>
</dbReference>
<feature type="signal peptide" evidence="2">
    <location>
        <begin position="1"/>
        <end position="20"/>
    </location>
</feature>
<feature type="propeptide" id="PRO_0000380822" evidence="1">
    <location>
        <begin position="21"/>
        <end position="119"/>
    </location>
</feature>
<feature type="chain" id="PRO_0000380823" description="Subtilisin-like protease 7">
    <location>
        <begin position="120"/>
        <end position="400"/>
    </location>
</feature>
<feature type="domain" description="Inhibitor I9" evidence="2">
    <location>
        <begin position="36"/>
        <end position="118"/>
    </location>
</feature>
<feature type="domain" description="Peptidase S8" evidence="3">
    <location>
        <begin position="129"/>
        <end position="400"/>
    </location>
</feature>
<feature type="active site" description="Charge relay system" evidence="3">
    <location>
        <position position="161"/>
    </location>
</feature>
<feature type="active site" description="Charge relay system" evidence="3">
    <location>
        <position position="192"/>
    </location>
</feature>
<feature type="active site" description="Charge relay system" evidence="3">
    <location>
        <position position="346"/>
    </location>
</feature>
<feature type="glycosylation site" description="N-linked (GlcNAc...) asparagine" evidence="2">
    <location>
        <position position="222"/>
    </location>
</feature>
<feature type="glycosylation site" description="N-linked (GlcNAc...) asparagine" evidence="2">
    <location>
        <position position="252"/>
    </location>
</feature>
<feature type="glycosylation site" description="N-linked (GlcNAc...) asparagine" evidence="2">
    <location>
        <position position="396"/>
    </location>
</feature>
<comment type="function">
    <text evidence="1">Secreted subtilisin-like serine protease with keratinolytic activity that contributes to pathogenicity.</text>
</comment>
<comment type="subcellular location">
    <subcellularLocation>
        <location evidence="4">Secreted</location>
    </subcellularLocation>
</comment>
<comment type="similarity">
    <text evidence="5">Belongs to the peptidase S8 family.</text>
</comment>
<gene>
    <name type="primary">SUB7</name>
</gene>
<accession>A1XIH5</accession>
<keyword id="KW-0325">Glycoprotein</keyword>
<keyword id="KW-0378">Hydrolase</keyword>
<keyword id="KW-0645">Protease</keyword>
<keyword id="KW-0964">Secreted</keyword>
<keyword id="KW-0720">Serine protease</keyword>
<keyword id="KW-0732">Signal</keyword>
<keyword id="KW-0843">Virulence</keyword>
<keyword id="KW-0865">Zymogen</keyword>
<reference key="1">
    <citation type="journal article" date="2007" name="FEMS Microbiol. Lett.">
        <title>Closely related dermatophyte species produce different patterns of secreted proteins.</title>
        <authorList>
            <person name="Giddey K."/>
            <person name="Favre B."/>
            <person name="Quadroni M."/>
            <person name="Monod M."/>
        </authorList>
    </citation>
    <scope>NUCLEOTIDE SEQUENCE [GENOMIC DNA]</scope>
    <scope>IDENTIFICATION BY MASS SPECTROMETRY</scope>
    <scope>SUBCELLULAR LOCATION</scope>
    <source>
        <strain>LAU 228</strain>
    </source>
</reference>
<protein>
    <recommendedName>
        <fullName>Subtilisin-like protease 7</fullName>
        <ecNumber>3.4.21.-</ecNumber>
    </recommendedName>
</protein>
<evidence type="ECO:0000250" key="1"/>
<evidence type="ECO:0000255" key="2"/>
<evidence type="ECO:0000255" key="3">
    <source>
        <dbReference type="PROSITE-ProRule" id="PRU01240"/>
    </source>
</evidence>
<evidence type="ECO:0000269" key="4">
    <source>
    </source>
</evidence>
<evidence type="ECO:0000305" key="5"/>
<organism>
    <name type="scientific">Trichophyton soudanense</name>
    <dbReference type="NCBI Taxonomy" id="69891"/>
    <lineage>
        <taxon>Eukaryota</taxon>
        <taxon>Fungi</taxon>
        <taxon>Dikarya</taxon>
        <taxon>Ascomycota</taxon>
        <taxon>Pezizomycotina</taxon>
        <taxon>Eurotiomycetes</taxon>
        <taxon>Eurotiomycetidae</taxon>
        <taxon>Onygenales</taxon>
        <taxon>Arthrodermataceae</taxon>
        <taxon>Trichophyton</taxon>
    </lineage>
</organism>
<proteinExistence type="evidence at protein level"/>
<sequence>MGFITKAIPLALAAASVINGAEILETRAGVQTLADKYIVVMNDGISDKDFDSHRSWVNRNHRRRLIRRGAKAMGGMKHTYNFPTGLKGYSGHFDEQMINEISKRADVKYIERDARVQINAIEQQDNVPSWGLARVGSKEPGGTTYYYDSTAGEGSTAYVIDTGTDIQHEEFEGRATWGANFVDDMDMDCNGHGTHVSGTIGGKTFGVAKKSNVVAVKVLDCNGSGSNSGVIMGMEWATKDAQQKGADKAVANMSLGGAFSQASNDAAAAIAKGGVFLAVAAGNDNVDAADSSPASEPSICTIAASTEQDSKADFSNFGQVVDVYAPGDSITSAKPGGGSQVLSGISMATPHVAGLGAYLIGLGKGGGPGLCDTIKQMAIDVIQNPGASTTSKLINNGSGM</sequence>
<name>SUB7_TRISD</name>